<comment type="function">
    <text>Catalyzes the hydrolysis of fructose 1,6-bisphosphate to fructose 6-phosphate in the presence of divalent cations and probably participates in glycogen synthesis from carbohydrate precursors, such as lactate.</text>
</comment>
<comment type="catalytic activity">
    <reaction>
        <text>beta-D-fructose 1,6-bisphosphate + H2O = beta-D-fructose 6-phosphate + phosphate</text>
        <dbReference type="Rhea" id="RHEA:11064"/>
        <dbReference type="ChEBI" id="CHEBI:15377"/>
        <dbReference type="ChEBI" id="CHEBI:32966"/>
        <dbReference type="ChEBI" id="CHEBI:43474"/>
        <dbReference type="ChEBI" id="CHEBI:57634"/>
        <dbReference type="EC" id="3.1.3.11"/>
    </reaction>
</comment>
<comment type="cofactor">
    <cofactor evidence="1">
        <name>Mg(2+)</name>
        <dbReference type="ChEBI" id="CHEBI:18420"/>
    </cofactor>
    <text evidence="1">Binds 3 Mg(2+) ions per subunit.</text>
</comment>
<comment type="activity regulation">
    <text evidence="1">Subject to complex allosteric regulation. The enzyme can assume an active R-state, or an inactive T-state. Intermediate conformations may exist. AMP acts as an allosteric inhibitor. Fructose 2,6-bisphosphate acts as a competitive inhibitor. Strongly inhibited by Ca(2+) (By similarity).</text>
</comment>
<comment type="pathway">
    <text>Carbohydrate biosynthesis; gluconeogenesis.</text>
</comment>
<comment type="subunit">
    <text evidence="1">Homotetramer. Interacts with ALDOA; the interaction blocks inhibition by physiological concentrations of AMP and reduces inhibition by Ca(2+). Interacts with alpha-actinin and F-actin (By similarity).</text>
</comment>
<comment type="subcellular location">
    <subcellularLocation>
        <location evidence="1">Cell junction</location>
    </subcellularLocation>
    <subcellularLocation>
        <location evidence="1">Cytoplasm</location>
    </subcellularLocation>
    <subcellularLocation>
        <location evidence="1">Nucleus</location>
    </subcellularLocation>
    <subcellularLocation>
        <location evidence="1">Cytoplasm</location>
        <location evidence="1">Myofibril</location>
        <location evidence="1">Sarcomere</location>
        <location evidence="1">Z line</location>
    </subcellularLocation>
    <text evidence="1">In neonatal cardiomyocytes, distributed throughout the cytosol, accumulating in the intercalated disks which occur at the Z line of cardiomyocytes and connect adjacent cells, and also located in the nucleus; dissociates from the Z line following an increase in cytosolic Ca(2+) concentration. In muscle precursor cells, localizes predominantly to the nucleus and to a lesser extent to the cytoplasm at the proliferative phase, while mainly localizing to the cytoplasm at the differentiation phase. Colocalizes with ALDOA and alpha-actinin on both sides of the Z line of skeletal muscle; dissociates rapidly from the Z line following an increase in cytosolic Ca(2+) concentration.</text>
</comment>
<comment type="similarity">
    <text evidence="3">Belongs to the FBPase class 1 family.</text>
</comment>
<reference key="1">
    <citation type="submission" date="2005-08" db="EMBL/GenBank/DDBJ databases">
        <authorList>
            <consortium name="NIH - Mammalian Gene Collection (MGC) project"/>
        </authorList>
    </citation>
    <scope>NUCLEOTIDE SEQUENCE [LARGE SCALE MRNA]</scope>
    <source>
        <strain>Crossbred X Angus</strain>
        <tissue>Ileum</tissue>
    </source>
</reference>
<protein>
    <recommendedName>
        <fullName>Fructose-1,6-bisphosphatase isozyme 2</fullName>
        <shortName>FBPase 2</shortName>
        <ecNumber>3.1.3.11</ecNumber>
    </recommendedName>
    <alternativeName>
        <fullName>D-fructose-1,6-bisphosphate 1-phosphohydrolase 2</fullName>
    </alternativeName>
    <alternativeName>
        <fullName>Muscle FBPase</fullName>
    </alternativeName>
</protein>
<name>F16P2_BOVIN</name>
<accession>Q2KJJ9</accession>
<keyword id="KW-0106">Calcium</keyword>
<keyword id="KW-0119">Carbohydrate metabolism</keyword>
<keyword id="KW-0965">Cell junction</keyword>
<keyword id="KW-0963">Cytoplasm</keyword>
<keyword id="KW-0312">Gluconeogenesis</keyword>
<keyword id="KW-0378">Hydrolase</keyword>
<keyword id="KW-0460">Magnesium</keyword>
<keyword id="KW-0479">Metal-binding</keyword>
<keyword id="KW-0539">Nucleus</keyword>
<keyword id="KW-0597">Phosphoprotein</keyword>
<keyword id="KW-1185">Reference proteome</keyword>
<evidence type="ECO:0000250" key="1"/>
<evidence type="ECO:0000250" key="2">
    <source>
        <dbReference type="UniProtKB" id="Q9Z1N1"/>
    </source>
</evidence>
<evidence type="ECO:0000305" key="3"/>
<sequence>MGDRSPFETDMLTLTRYVMEKGRQAKGTGELTQLLNSMLTAIKAISSAVRKAGLANLYGIAGSVNVTGDEVKKLDVLSNALVINMLQSSYSTCVLVSEENKEAIITSKEKRGKYVVCFDPLDGSSNIDCLASIGTIFAIYRKTSEDEPSEKDALQPGRNIVAAGYALYGSATLVALSTGQGVDLFMLDPALGEFVLVEKDVKIKKKGKIYSLNEGYAKYFDAATTEYVQKKKFPEDGSAPYGARYVGSMVADVHRTLVYGGIFLYPANQKSPKGKLRLLYECNPVAYIIEQAGGLATTGTQPVLDVKPEAIHQRVPLILGSPEDVQEYLTCVQKNQAGR</sequence>
<organism>
    <name type="scientific">Bos taurus</name>
    <name type="common">Bovine</name>
    <dbReference type="NCBI Taxonomy" id="9913"/>
    <lineage>
        <taxon>Eukaryota</taxon>
        <taxon>Metazoa</taxon>
        <taxon>Chordata</taxon>
        <taxon>Craniata</taxon>
        <taxon>Vertebrata</taxon>
        <taxon>Euteleostomi</taxon>
        <taxon>Mammalia</taxon>
        <taxon>Eutheria</taxon>
        <taxon>Laurasiatheria</taxon>
        <taxon>Artiodactyla</taxon>
        <taxon>Ruminantia</taxon>
        <taxon>Pecora</taxon>
        <taxon>Bovidae</taxon>
        <taxon>Bovinae</taxon>
        <taxon>Bos</taxon>
    </lineage>
</organism>
<proteinExistence type="evidence at transcript level"/>
<feature type="chain" id="PRO_0000247323" description="Fructose-1,6-bisphosphatase isozyme 2">
    <location>
        <begin position="1"/>
        <end position="339"/>
    </location>
</feature>
<feature type="region of interest" description="Important for interaction with ALDOA" evidence="1">
    <location>
        <begin position="3"/>
        <end position="10"/>
    </location>
</feature>
<feature type="short sequence motif" description="Nuclear localization signal" evidence="1">
    <location>
        <begin position="204"/>
        <end position="208"/>
    </location>
</feature>
<feature type="binding site" evidence="1">
    <location>
        <position position="18"/>
    </location>
    <ligand>
        <name>AMP</name>
        <dbReference type="ChEBI" id="CHEBI:456215"/>
    </ligand>
</feature>
<feature type="binding site" evidence="1">
    <location>
        <begin position="28"/>
        <end position="32"/>
    </location>
    <ligand>
        <name>AMP</name>
        <dbReference type="ChEBI" id="CHEBI:456215"/>
    </ligand>
</feature>
<feature type="binding site" evidence="1">
    <location>
        <position position="69"/>
    </location>
    <ligand>
        <name>Mg(2+)</name>
        <dbReference type="ChEBI" id="CHEBI:18420"/>
        <label>1</label>
    </ligand>
</feature>
<feature type="binding site" evidence="1">
    <location>
        <position position="98"/>
    </location>
    <ligand>
        <name>Mg(2+)</name>
        <dbReference type="ChEBI" id="CHEBI:18420"/>
        <label>1</label>
    </ligand>
</feature>
<feature type="binding site" evidence="1">
    <location>
        <position position="98"/>
    </location>
    <ligand>
        <name>Mg(2+)</name>
        <dbReference type="ChEBI" id="CHEBI:18420"/>
        <label>2</label>
    </ligand>
</feature>
<feature type="binding site" evidence="1">
    <location>
        <begin position="113"/>
        <end position="114"/>
    </location>
    <ligand>
        <name>AMP</name>
        <dbReference type="ChEBI" id="CHEBI:456215"/>
    </ligand>
</feature>
<feature type="binding site" evidence="1">
    <location>
        <position position="119"/>
    </location>
    <ligand>
        <name>Mg(2+)</name>
        <dbReference type="ChEBI" id="CHEBI:18420"/>
        <label>2</label>
    </ligand>
</feature>
<feature type="binding site" evidence="1">
    <location>
        <position position="119"/>
    </location>
    <ligand>
        <name>Mg(2+)</name>
        <dbReference type="ChEBI" id="CHEBI:18420"/>
        <label>3</label>
    </ligand>
</feature>
<feature type="binding site" evidence="1">
    <location>
        <position position="121"/>
    </location>
    <ligand>
        <name>Mg(2+)</name>
        <dbReference type="ChEBI" id="CHEBI:18420"/>
        <label>2</label>
    </ligand>
</feature>
<feature type="binding site" evidence="1">
    <location>
        <position position="122"/>
    </location>
    <ligand>
        <name>Mg(2+)</name>
        <dbReference type="ChEBI" id="CHEBI:18420"/>
        <label>3</label>
    </ligand>
</feature>
<feature type="binding site" evidence="1">
    <location>
        <position position="122"/>
    </location>
    <ligand>
        <name>substrate</name>
    </ligand>
</feature>
<feature type="binding site" evidence="1">
    <location>
        <position position="141"/>
    </location>
    <ligand>
        <name>AMP</name>
        <dbReference type="ChEBI" id="CHEBI:456215"/>
    </ligand>
</feature>
<feature type="binding site" evidence="1">
    <location>
        <begin position="213"/>
        <end position="216"/>
    </location>
    <ligand>
        <name>substrate</name>
    </ligand>
</feature>
<feature type="binding site" evidence="1">
    <location>
        <begin position="245"/>
        <end position="249"/>
    </location>
    <ligand>
        <name>substrate</name>
    </ligand>
</feature>
<feature type="binding site" evidence="1">
    <location>
        <position position="265"/>
    </location>
    <ligand>
        <name>substrate</name>
    </ligand>
</feature>
<feature type="binding site" evidence="1">
    <location>
        <position position="275"/>
    </location>
    <ligand>
        <name>substrate</name>
    </ligand>
</feature>
<feature type="binding site" evidence="1">
    <location>
        <position position="281"/>
    </location>
    <ligand>
        <name>Mg(2+)</name>
        <dbReference type="ChEBI" id="CHEBI:18420"/>
        <label>3</label>
    </ligand>
</feature>
<feature type="site" description="Important for the conversion from active R-state to inactive T-state in the presence of AMP" evidence="1">
    <location>
        <position position="33"/>
    </location>
</feature>
<feature type="modified residue" description="Phosphotyrosine" evidence="2">
    <location>
        <position position="216"/>
    </location>
</feature>
<feature type="modified residue" description="Phosphotyrosine" evidence="2">
    <location>
        <position position="219"/>
    </location>
</feature>
<gene>
    <name type="primary">FBP2</name>
</gene>
<dbReference type="EC" id="3.1.3.11"/>
<dbReference type="EMBL" id="BC102390">
    <property type="protein sequence ID" value="AAI02391.1"/>
    <property type="molecule type" value="mRNA"/>
</dbReference>
<dbReference type="RefSeq" id="NP_001039629.1">
    <property type="nucleotide sequence ID" value="NM_001046164.2"/>
</dbReference>
<dbReference type="SMR" id="Q2KJJ9"/>
<dbReference type="FunCoup" id="Q2KJJ9">
    <property type="interactions" value="770"/>
</dbReference>
<dbReference type="STRING" id="9913.ENSBTAP00000026056"/>
<dbReference type="PaxDb" id="9913-ENSBTAP00000026056"/>
<dbReference type="PeptideAtlas" id="Q2KJJ9"/>
<dbReference type="Ensembl" id="ENSBTAT00000026056.4">
    <property type="protein sequence ID" value="ENSBTAP00000026056.2"/>
    <property type="gene ID" value="ENSBTAG00000019554.4"/>
</dbReference>
<dbReference type="GeneID" id="514066"/>
<dbReference type="KEGG" id="bta:514066"/>
<dbReference type="CTD" id="8789"/>
<dbReference type="VEuPathDB" id="HostDB:ENSBTAG00000019554"/>
<dbReference type="VGNC" id="VGNC:28888">
    <property type="gene designation" value="FBP2"/>
</dbReference>
<dbReference type="eggNOG" id="KOG1458">
    <property type="taxonomic scope" value="Eukaryota"/>
</dbReference>
<dbReference type="GeneTree" id="ENSGT00390000015513"/>
<dbReference type="HOGENOM" id="CLU_039977_1_0_1"/>
<dbReference type="InParanoid" id="Q2KJJ9"/>
<dbReference type="OMA" id="NSRFWEP"/>
<dbReference type="OrthoDB" id="10256725at2759"/>
<dbReference type="TreeFam" id="TF314824"/>
<dbReference type="Reactome" id="R-BTA-70263">
    <property type="pathway name" value="Gluconeogenesis"/>
</dbReference>
<dbReference type="SABIO-RK" id="Q2KJJ9"/>
<dbReference type="UniPathway" id="UPA00138"/>
<dbReference type="Proteomes" id="UP000009136">
    <property type="component" value="Chromosome 8"/>
</dbReference>
<dbReference type="Bgee" id="ENSBTAG00000019554">
    <property type="expression patterns" value="Expressed in biceps femoris and 84 other cell types or tissues"/>
</dbReference>
<dbReference type="GO" id="GO:0070161">
    <property type="term" value="C:anchoring junction"/>
    <property type="evidence" value="ECO:0007669"/>
    <property type="project" value="UniProtKB-SubCell"/>
</dbReference>
<dbReference type="GO" id="GO:0005737">
    <property type="term" value="C:cytoplasm"/>
    <property type="evidence" value="ECO:0000318"/>
    <property type="project" value="GO_Central"/>
</dbReference>
<dbReference type="GO" id="GO:0005829">
    <property type="term" value="C:cytosol"/>
    <property type="evidence" value="ECO:0000318"/>
    <property type="project" value="GO_Central"/>
</dbReference>
<dbReference type="GO" id="GO:0005634">
    <property type="term" value="C:nucleus"/>
    <property type="evidence" value="ECO:0007669"/>
    <property type="project" value="UniProtKB-SubCell"/>
</dbReference>
<dbReference type="GO" id="GO:0030018">
    <property type="term" value="C:Z disc"/>
    <property type="evidence" value="ECO:0007669"/>
    <property type="project" value="UniProtKB-SubCell"/>
</dbReference>
<dbReference type="GO" id="GO:0042132">
    <property type="term" value="F:fructose 1,6-bisphosphate 1-phosphatase activity"/>
    <property type="evidence" value="ECO:0000318"/>
    <property type="project" value="GO_Central"/>
</dbReference>
<dbReference type="GO" id="GO:0046872">
    <property type="term" value="F:metal ion binding"/>
    <property type="evidence" value="ECO:0007669"/>
    <property type="project" value="UniProtKB-KW"/>
</dbReference>
<dbReference type="GO" id="GO:0030388">
    <property type="term" value="P:fructose 1,6-bisphosphate metabolic process"/>
    <property type="evidence" value="ECO:0000318"/>
    <property type="project" value="GO_Central"/>
</dbReference>
<dbReference type="GO" id="GO:0006002">
    <property type="term" value="P:fructose 6-phosphate metabolic process"/>
    <property type="evidence" value="ECO:0000318"/>
    <property type="project" value="GO_Central"/>
</dbReference>
<dbReference type="GO" id="GO:0006000">
    <property type="term" value="P:fructose metabolic process"/>
    <property type="evidence" value="ECO:0000318"/>
    <property type="project" value="GO_Central"/>
</dbReference>
<dbReference type="GO" id="GO:0006094">
    <property type="term" value="P:gluconeogenesis"/>
    <property type="evidence" value="ECO:0000318"/>
    <property type="project" value="GO_Central"/>
</dbReference>
<dbReference type="CDD" id="cd00354">
    <property type="entry name" value="FBPase"/>
    <property type="match status" value="1"/>
</dbReference>
<dbReference type="FunFam" id="3.40.190.80:FF:000001">
    <property type="entry name" value="Fructose-1,6-bisphosphatase class 1"/>
    <property type="match status" value="1"/>
</dbReference>
<dbReference type="FunFam" id="3.30.540.10:FF:000005">
    <property type="entry name" value="Fructose-1,6-bisphosphatase isozyme 2"/>
    <property type="match status" value="1"/>
</dbReference>
<dbReference type="Gene3D" id="3.40.190.80">
    <property type="match status" value="1"/>
</dbReference>
<dbReference type="Gene3D" id="3.30.540.10">
    <property type="entry name" value="Fructose-1,6-Bisphosphatase, subunit A, domain 1"/>
    <property type="match status" value="1"/>
</dbReference>
<dbReference type="HAMAP" id="MF_01855">
    <property type="entry name" value="FBPase_class1"/>
    <property type="match status" value="1"/>
</dbReference>
<dbReference type="InterPro" id="IPR044015">
    <property type="entry name" value="FBPase_C_dom"/>
</dbReference>
<dbReference type="InterPro" id="IPR000146">
    <property type="entry name" value="FBPase_class-1"/>
</dbReference>
<dbReference type="InterPro" id="IPR033391">
    <property type="entry name" value="FBPase_N"/>
</dbReference>
<dbReference type="InterPro" id="IPR028343">
    <property type="entry name" value="FBPtase"/>
</dbReference>
<dbReference type="InterPro" id="IPR020548">
    <property type="entry name" value="Fructose_bisphosphatase_AS"/>
</dbReference>
<dbReference type="NCBIfam" id="NF006778">
    <property type="entry name" value="PRK09293.1-1"/>
    <property type="match status" value="1"/>
</dbReference>
<dbReference type="PANTHER" id="PTHR11556:SF13">
    <property type="entry name" value="FRUCTOSE-1,6-BISPHOSPHATASE ISOZYME 2"/>
    <property type="match status" value="1"/>
</dbReference>
<dbReference type="PANTHER" id="PTHR11556">
    <property type="entry name" value="FRUCTOSE-1,6-BISPHOSPHATASE-RELATED"/>
    <property type="match status" value="1"/>
</dbReference>
<dbReference type="Pfam" id="PF00316">
    <property type="entry name" value="FBPase"/>
    <property type="match status" value="1"/>
</dbReference>
<dbReference type="Pfam" id="PF18913">
    <property type="entry name" value="FBPase_C"/>
    <property type="match status" value="1"/>
</dbReference>
<dbReference type="PIRSF" id="PIRSF500210">
    <property type="entry name" value="FBPtase"/>
    <property type="match status" value="1"/>
</dbReference>
<dbReference type="PIRSF" id="PIRSF000904">
    <property type="entry name" value="FBPtase_SBPase"/>
    <property type="match status" value="1"/>
</dbReference>
<dbReference type="PRINTS" id="PR00115">
    <property type="entry name" value="F16BPHPHTASE"/>
</dbReference>
<dbReference type="SUPFAM" id="SSF56655">
    <property type="entry name" value="Carbohydrate phosphatase"/>
    <property type="match status" value="1"/>
</dbReference>
<dbReference type="PROSITE" id="PS00124">
    <property type="entry name" value="FBPASE"/>
    <property type="match status" value="1"/>
</dbReference>